<comment type="function">
    <text>High affinity receptor for melatonin. Likely to mediate the reproductive and circadian actions of melatonin. The activity of this receptor is mediated by pertussis toxin sensitive G proteins that inhibit adenylate cyclase activity.</text>
</comment>
<comment type="subunit">
    <text evidence="4">Interacts with GPR61, GPR62 and GPR135 (PubMed:28827538).</text>
</comment>
<comment type="interaction">
    <interactant intactId="EBI-1188341">
        <id>P49286</id>
    </interactant>
    <interactant intactId="EBI-994141">
        <id>P28335</id>
        <label>HTR2C</label>
    </interactant>
    <organismsDiffer>false</organismsDiffer>
    <experiments>3</experiments>
</comment>
<comment type="interaction">
    <interactant intactId="EBI-1188341">
        <id>P49286</id>
    </interactant>
    <interactant intactId="EBI-1188238">
        <id>P48039</id>
        <label>MTNR1A</label>
    </interactant>
    <organismsDiffer>false</organismsDiffer>
    <experiments>2</experiments>
</comment>
<comment type="interaction">
    <interactant intactId="EBI-1188341">
        <id>P49286</id>
    </interactant>
    <interactant intactId="EBI-1052678">
        <id>O76081</id>
        <label>RGS20</label>
    </interactant>
    <organismsDiffer>false</organismsDiffer>
    <experiments>2</experiments>
</comment>
<comment type="interaction">
    <interactant intactId="EBI-1188341">
        <id>P49286</id>
    </interactant>
    <interactant intactId="EBI-308443">
        <id>Q14669</id>
        <label>TRIP12</label>
    </interactant>
    <organismsDiffer>false</organismsDiffer>
    <experiments>3</experiments>
</comment>
<comment type="subcellular location">
    <subcellularLocation>
        <location>Cell membrane</location>
        <topology>Multi-pass membrane protein</topology>
    </subcellularLocation>
</comment>
<comment type="tissue specificity">
    <text evidence="6">Expressed in retina and less in brain and hippocampus.</text>
</comment>
<comment type="similarity">
    <text evidence="2">Belongs to the G-protein coupled receptor 1 family.</text>
</comment>
<comment type="online information" name="Wikipedia">
    <link uri="https://en.wikipedia.org/wiki/Melatonin_receptor"/>
    <text>Melatonin receptor entry</text>
</comment>
<reference key="1">
    <citation type="journal article" date="1995" name="Proc. Natl. Acad. Sci. U.S.A.">
        <title>Molecular characterization of a second melatonin receptor expressed in human retina and brain: the Mel1b melatonin receptor.</title>
        <authorList>
            <person name="Reppert S.M."/>
            <person name="Godson C."/>
            <person name="Mahle C.D."/>
            <person name="Weaver D.R."/>
            <person name="Slaugenhaupt S.A."/>
            <person name="Gusella J.F."/>
        </authorList>
    </citation>
    <scope>NUCLEOTIDE SEQUENCE [MRNA]</scope>
    <scope>TISSUE SPECIFICITY</scope>
</reference>
<reference key="2">
    <citation type="journal article" date="2000" name="Neurosci. Lett.">
        <title>Genetic polymorphisms of human melatonin 1b receptor gene in circadian rhythm sleep disorders and controls.</title>
        <authorList>
            <person name="Ebisawa T."/>
            <person name="Uchiyama M."/>
            <person name="Kajimura N."/>
            <person name="Kamei Y."/>
            <person name="Shibui K."/>
            <person name="Kim K."/>
            <person name="Kudo Y."/>
            <person name="Iwase T."/>
            <person name="Sugishita M."/>
            <person name="Jodoi T."/>
            <person name="Ikeda M."/>
            <person name="Ozeki Y."/>
            <person name="Watanabe T."/>
            <person name="Sekimoto M."/>
            <person name="Katoh M."/>
            <person name="Yamada N."/>
            <person name="Toyoshima R."/>
            <person name="Okawa M."/>
            <person name="Takahashi K."/>
            <person name="Yamauchi T."/>
        </authorList>
    </citation>
    <scope>NUCLEOTIDE SEQUENCE [GENOMIC DNA]</scope>
    <scope>VARIANTS GLU-24 AND PHE-66</scope>
</reference>
<reference key="3">
    <citation type="submission" date="2004-01" db="EMBL/GenBank/DDBJ databases">
        <title>cDNA clones of human proteins involved in signal transduction sequenced by the Guthrie cDNA resource center (www.cdna.org).</title>
        <authorList>
            <person name="King M.M."/>
            <person name="Aronstam R.S."/>
            <person name="Sharma S.V."/>
        </authorList>
    </citation>
    <scope>NUCLEOTIDE SEQUENCE [LARGE SCALE MRNA]</scope>
    <source>
        <tissue>Retina</tissue>
    </source>
</reference>
<reference key="4">
    <citation type="journal article" date="2004" name="Genome Res.">
        <title>The status, quality, and expansion of the NIH full-length cDNA project: the Mammalian Gene Collection (MGC).</title>
        <authorList>
            <consortium name="The MGC Project Team"/>
        </authorList>
    </citation>
    <scope>NUCLEOTIDE SEQUENCE [LARGE SCALE MRNA]</scope>
</reference>
<reference key="5">
    <citation type="journal article" date="2017" name="Sci. Rep.">
        <title>Orphan GPR61, GPR62 and GPR135 receptors and the melatonin MT2 receptor reciprocally modulate their signaling functions.</title>
        <authorList>
            <person name="Oishi A."/>
            <person name="Karamitri A."/>
            <person name="Gerbier R."/>
            <person name="Lahuna O."/>
            <person name="Ahmad R."/>
            <person name="Jockers R."/>
        </authorList>
    </citation>
    <scope>INTERACTION WITH GPR61; GPR62 AND GPR135</scope>
</reference>
<reference key="6">
    <citation type="journal article" date="2019" name="Nature">
        <title>XFEL structures of the human MT2 melatonin receptor reveal the basis of subtype selectivity.</title>
        <authorList>
            <person name="Johansson L.C."/>
            <person name="Stauch B."/>
            <person name="McCorvy J.D."/>
            <person name="Han G.W."/>
            <person name="Patel N."/>
            <person name="Huang X.P."/>
            <person name="Batyuk A."/>
            <person name="Gati C."/>
            <person name="Slocum S.T."/>
            <person name="Li C."/>
            <person name="Grandner J.M."/>
            <person name="Hao S."/>
            <person name="Olsen R.H.J."/>
            <person name="Tribo A.R."/>
            <person name="Zaare S."/>
            <person name="Zhu L."/>
            <person name="Zatsepin N.A."/>
            <person name="Weierstall U."/>
            <person name="Yous S."/>
            <person name="Stevens R.C."/>
            <person name="Liu W."/>
            <person name="Roth B.L."/>
            <person name="Katritch V."/>
            <person name="Cherezov V."/>
        </authorList>
    </citation>
    <scope>X-RAY CRYSTALLOGRAPHY (2.80 ANGSTROMS) OF 35-340 IN COMPLEX WITH MELATONIN ANALOG</scope>
    <scope>DISULFIDE BOND</scope>
</reference>
<accession>P49286</accession>
<sequence length="362" mass="40188">MSENGSFANCCEAGGWAVRPGWSGAGSARPSRTPRPPWVAPALSAVLIVTTAVDVVGNLLVILSVLRNRKLRNAGNLFLVSLALADLVVAFYPYPLILVAIFYDGWALGEEHCKASAFVMGLSVIGSVFNITAIAINRYCYICHSMAYHRIYRRWHTPLHICLIWLLTVVALLPNFFVGSLEYDPRIYSCTFIQTASTQYTAAVVVIHFLLPIAVVSFCYLRIWVLVLQARRKAKPESRLCLKPSDLRSFLTMFVVFVIFAICWAPLNCIGLAVAINPQEMAPQIPEGLFVTSYLLAYFNSCLNAIVYGLLNQNFRREYKRILLALWNPRHCIQDASKGSHAEGLQSPAPPIIGVQHQADAL</sequence>
<keyword id="KW-0002">3D-structure</keyword>
<keyword id="KW-1003">Cell membrane</keyword>
<keyword id="KW-1015">Disulfide bond</keyword>
<keyword id="KW-0297">G-protein coupled receptor</keyword>
<keyword id="KW-0325">Glycoprotein</keyword>
<keyword id="KW-0472">Membrane</keyword>
<keyword id="KW-0675">Receptor</keyword>
<keyword id="KW-1185">Reference proteome</keyword>
<keyword id="KW-0807">Transducer</keyword>
<keyword id="KW-0812">Transmembrane</keyword>
<keyword id="KW-1133">Transmembrane helix</keyword>
<gene>
    <name type="primary">MTNR1B</name>
</gene>
<feature type="chain" id="PRO_0000069870" description="Melatonin receptor type 1B">
    <location>
        <begin position="1"/>
        <end position="362"/>
    </location>
</feature>
<feature type="topological domain" description="Extracellular" evidence="1">
    <location>
        <begin position="1"/>
        <end position="42"/>
    </location>
</feature>
<feature type="transmembrane region" description="Helical; Name=1" evidence="1">
    <location>
        <begin position="43"/>
        <end position="63"/>
    </location>
</feature>
<feature type="topological domain" description="Cytoplasmic" evidence="1">
    <location>
        <begin position="64"/>
        <end position="76"/>
    </location>
</feature>
<feature type="transmembrane region" description="Helical; Name=2" evidence="1">
    <location>
        <begin position="77"/>
        <end position="97"/>
    </location>
</feature>
<feature type="topological domain" description="Extracellular" evidence="1">
    <location>
        <begin position="98"/>
        <end position="115"/>
    </location>
</feature>
<feature type="transmembrane region" description="Helical; Name=3" evidence="1">
    <location>
        <begin position="116"/>
        <end position="136"/>
    </location>
</feature>
<feature type="topological domain" description="Cytoplasmic" evidence="1">
    <location>
        <begin position="137"/>
        <end position="155"/>
    </location>
</feature>
<feature type="transmembrane region" description="Helical; Name=4" evidence="1">
    <location>
        <begin position="156"/>
        <end position="176"/>
    </location>
</feature>
<feature type="topological domain" description="Extracellular" evidence="1">
    <location>
        <begin position="177"/>
        <end position="200"/>
    </location>
</feature>
<feature type="transmembrane region" description="Helical; Name=5" evidence="1">
    <location>
        <begin position="201"/>
        <end position="221"/>
    </location>
</feature>
<feature type="topological domain" description="Cytoplasmic" evidence="1">
    <location>
        <begin position="222"/>
        <end position="253"/>
    </location>
</feature>
<feature type="transmembrane region" description="Helical; Name=6" evidence="1">
    <location>
        <begin position="254"/>
        <end position="274"/>
    </location>
</feature>
<feature type="topological domain" description="Extracellular" evidence="1">
    <location>
        <begin position="275"/>
        <end position="287"/>
    </location>
</feature>
<feature type="transmembrane region" description="Helical; Name=7" evidence="1">
    <location>
        <begin position="288"/>
        <end position="308"/>
    </location>
</feature>
<feature type="topological domain" description="Cytoplasmic" evidence="1">
    <location>
        <begin position="309"/>
        <end position="362"/>
    </location>
</feature>
<feature type="binding site" evidence="5 7">
    <location>
        <position position="175"/>
    </location>
    <ligand>
        <name>melatonin</name>
        <dbReference type="ChEBI" id="CHEBI:16796"/>
    </ligand>
</feature>
<feature type="binding site" evidence="5 7">
    <location>
        <position position="194"/>
    </location>
    <ligand>
        <name>melatonin</name>
        <dbReference type="ChEBI" id="CHEBI:16796"/>
    </ligand>
</feature>
<feature type="glycosylation site" description="N-linked (GlcNAc...) asparagine" evidence="1">
    <location>
        <position position="4"/>
    </location>
</feature>
<feature type="disulfide bond" evidence="2 5 7">
    <location>
        <begin position="113"/>
        <end position="190"/>
    </location>
</feature>
<feature type="sequence variant" id="VAR_009262" description="In dbSNP:rs8192552." evidence="3">
    <original>G</original>
    <variation>E</variation>
    <location>
        <position position="24"/>
    </location>
</feature>
<feature type="sequence variant" id="VAR_009263" description="In dbSNP:rs370338802." evidence="3">
    <original>L</original>
    <variation>F</variation>
    <location>
        <position position="66"/>
    </location>
</feature>
<feature type="sequence variant" id="VAR_049421" description="In dbSNP:rs8192553.">
    <original>R</original>
    <variation>H</variation>
    <location>
        <position position="231"/>
    </location>
</feature>
<feature type="helix" evidence="8">
    <location>
        <begin position="39"/>
        <end position="67"/>
    </location>
</feature>
<feature type="helix" evidence="8">
    <location>
        <begin position="69"/>
        <end position="72"/>
    </location>
</feature>
<feature type="turn" evidence="8">
    <location>
        <begin position="73"/>
        <end position="76"/>
    </location>
</feature>
<feature type="helix" evidence="8">
    <location>
        <begin position="77"/>
        <end position="91"/>
    </location>
</feature>
<feature type="helix" evidence="8">
    <location>
        <begin position="93"/>
        <end position="102"/>
    </location>
</feature>
<feature type="helix" evidence="8">
    <location>
        <begin position="111"/>
        <end position="143"/>
    </location>
</feature>
<feature type="helix" evidence="8">
    <location>
        <begin position="145"/>
        <end position="150"/>
    </location>
</feature>
<feature type="helix" evidence="8">
    <location>
        <begin position="156"/>
        <end position="172"/>
    </location>
</feature>
<feature type="helix" evidence="8">
    <location>
        <begin position="175"/>
        <end position="178"/>
    </location>
</feature>
<feature type="strand" evidence="8">
    <location>
        <begin position="181"/>
        <end position="184"/>
    </location>
</feature>
<feature type="helix" evidence="8">
    <location>
        <begin position="185"/>
        <end position="187"/>
    </location>
</feature>
<feature type="strand" evidence="8">
    <location>
        <begin position="189"/>
        <end position="192"/>
    </location>
</feature>
<feature type="strand" evidence="8">
    <location>
        <begin position="194"/>
        <end position="196"/>
    </location>
</feature>
<feature type="helix" evidence="8">
    <location>
        <begin position="198"/>
        <end position="207"/>
    </location>
</feature>
<feature type="helix" evidence="8">
    <location>
        <begin position="210"/>
        <end position="229"/>
    </location>
</feature>
<feature type="helix" evidence="8">
    <location>
        <begin position="246"/>
        <end position="276"/>
    </location>
</feature>
<feature type="turn" evidence="8">
    <location>
        <begin position="278"/>
        <end position="280"/>
    </location>
</feature>
<feature type="helix" evidence="9">
    <location>
        <begin position="281"/>
        <end position="284"/>
    </location>
</feature>
<feature type="helix" evidence="8">
    <location>
        <begin position="287"/>
        <end position="299"/>
    </location>
</feature>
<feature type="turn" evidence="8">
    <location>
        <begin position="300"/>
        <end position="303"/>
    </location>
</feature>
<feature type="helix" evidence="8">
    <location>
        <begin position="304"/>
        <end position="311"/>
    </location>
</feature>
<feature type="helix" evidence="8">
    <location>
        <begin position="313"/>
        <end position="327"/>
    </location>
</feature>
<organism>
    <name type="scientific">Homo sapiens</name>
    <name type="common">Human</name>
    <dbReference type="NCBI Taxonomy" id="9606"/>
    <lineage>
        <taxon>Eukaryota</taxon>
        <taxon>Metazoa</taxon>
        <taxon>Chordata</taxon>
        <taxon>Craniata</taxon>
        <taxon>Vertebrata</taxon>
        <taxon>Euteleostomi</taxon>
        <taxon>Mammalia</taxon>
        <taxon>Eutheria</taxon>
        <taxon>Euarchontoglires</taxon>
        <taxon>Primates</taxon>
        <taxon>Haplorrhini</taxon>
        <taxon>Catarrhini</taxon>
        <taxon>Hominidae</taxon>
        <taxon>Homo</taxon>
    </lineage>
</organism>
<evidence type="ECO:0000255" key="1"/>
<evidence type="ECO:0000255" key="2">
    <source>
        <dbReference type="PROSITE-ProRule" id="PRU00521"/>
    </source>
</evidence>
<evidence type="ECO:0000269" key="3">
    <source>
    </source>
</evidence>
<evidence type="ECO:0000269" key="4">
    <source>
    </source>
</evidence>
<evidence type="ECO:0000269" key="5">
    <source>
    </source>
</evidence>
<evidence type="ECO:0000269" key="6">
    <source>
    </source>
</evidence>
<evidence type="ECO:0007744" key="7">
    <source>
        <dbReference type="PDB" id="6ME6"/>
    </source>
</evidence>
<evidence type="ECO:0007829" key="8">
    <source>
        <dbReference type="PDB" id="6ME6"/>
    </source>
</evidence>
<evidence type="ECO:0007829" key="9">
    <source>
        <dbReference type="PDB" id="6ME8"/>
    </source>
</evidence>
<proteinExistence type="evidence at protein level"/>
<name>MTR1B_HUMAN</name>
<dbReference type="EMBL" id="U25341">
    <property type="protein sequence ID" value="AAC50612.1"/>
    <property type="molecule type" value="mRNA"/>
</dbReference>
<dbReference type="EMBL" id="AB033598">
    <property type="protein sequence ID" value="BAA92315.1"/>
    <property type="molecule type" value="Genomic_DNA"/>
</dbReference>
<dbReference type="EMBL" id="AY521019">
    <property type="protein sequence ID" value="AAS00461.1"/>
    <property type="molecule type" value="mRNA"/>
</dbReference>
<dbReference type="EMBL" id="BC069163">
    <property type="protein sequence ID" value="AAH69163.1"/>
    <property type="molecule type" value="mRNA"/>
</dbReference>
<dbReference type="CCDS" id="CCDS8290.1"/>
<dbReference type="PIR" id="I38990">
    <property type="entry name" value="I38990"/>
</dbReference>
<dbReference type="RefSeq" id="NP_005950.1">
    <property type="nucleotide sequence ID" value="NM_005959.5"/>
</dbReference>
<dbReference type="RefSeq" id="XP_011541141.1">
    <property type="nucleotide sequence ID" value="XM_011542839.3"/>
</dbReference>
<dbReference type="PDB" id="6ME6">
    <property type="method" value="X-ray"/>
    <property type="resolution" value="2.80 A"/>
    <property type="chains" value="A/B=35-340"/>
</dbReference>
<dbReference type="PDB" id="6ME7">
    <property type="method" value="X-ray"/>
    <property type="resolution" value="3.20 A"/>
    <property type="chains" value="A/B=35-340"/>
</dbReference>
<dbReference type="PDB" id="6ME8">
    <property type="method" value="X-ray"/>
    <property type="resolution" value="3.10 A"/>
    <property type="chains" value="A/B=35-340"/>
</dbReference>
<dbReference type="PDB" id="6ME9">
    <property type="method" value="X-ray"/>
    <property type="resolution" value="3.30 A"/>
    <property type="chains" value="A/B=35-340"/>
</dbReference>
<dbReference type="PDB" id="7VH0">
    <property type="method" value="EM"/>
    <property type="resolution" value="3.46 A"/>
    <property type="chains" value="A=1-362"/>
</dbReference>
<dbReference type="PDBsum" id="6ME6"/>
<dbReference type="PDBsum" id="6ME7"/>
<dbReference type="PDBsum" id="6ME8"/>
<dbReference type="PDBsum" id="6ME9"/>
<dbReference type="PDBsum" id="7VH0"/>
<dbReference type="EMDB" id="EMD-31982"/>
<dbReference type="SMR" id="P49286"/>
<dbReference type="BioGRID" id="110640">
    <property type="interactions" value="198"/>
</dbReference>
<dbReference type="CORUM" id="P49286"/>
<dbReference type="FunCoup" id="P49286">
    <property type="interactions" value="745"/>
</dbReference>
<dbReference type="IntAct" id="P49286">
    <property type="interactions" value="204"/>
</dbReference>
<dbReference type="MINT" id="P49286"/>
<dbReference type="STRING" id="9606.ENSP00000257068"/>
<dbReference type="BindingDB" id="P49286"/>
<dbReference type="ChEMBL" id="CHEMBL1946"/>
<dbReference type="DrugBank" id="DB06594">
    <property type="generic name" value="Agomelatine"/>
</dbReference>
<dbReference type="DrugBank" id="DB01065">
    <property type="generic name" value="Melatonin"/>
</dbReference>
<dbReference type="DrugBank" id="DB08190">
    <property type="generic name" value="N-[2-(2-iodo-5-methoxy-1H-indol-3-yl)ethyl]acetamide"/>
</dbReference>
<dbReference type="DrugBank" id="DB00980">
    <property type="generic name" value="Ramelteon"/>
</dbReference>
<dbReference type="DrugBank" id="DB02709">
    <property type="generic name" value="Resveratrol"/>
</dbReference>
<dbReference type="DrugBank" id="DB09071">
    <property type="generic name" value="Tasimelteon"/>
</dbReference>
<dbReference type="DrugBank" id="DB15133">
    <property type="generic name" value="Tepotinib"/>
</dbReference>
<dbReference type="DrugCentral" id="P49286"/>
<dbReference type="GuidetoPHARMACOLOGY" id="288"/>
<dbReference type="GlyCosmos" id="P49286">
    <property type="glycosylation" value="1 site, No reported glycans"/>
</dbReference>
<dbReference type="GlyGen" id="P49286">
    <property type="glycosylation" value="1 site"/>
</dbReference>
<dbReference type="BioMuta" id="MTNR1B"/>
<dbReference type="DMDM" id="1346548"/>
<dbReference type="PaxDb" id="9606-ENSP00000257068"/>
<dbReference type="Antibodypedia" id="17799">
    <property type="antibodies" value="330 antibodies from 33 providers"/>
</dbReference>
<dbReference type="DNASU" id="4544"/>
<dbReference type="Ensembl" id="ENST00000257068.3">
    <property type="protein sequence ID" value="ENSP00000257068.2"/>
    <property type="gene ID" value="ENSG00000134640.3"/>
</dbReference>
<dbReference type="GeneID" id="4544"/>
<dbReference type="KEGG" id="hsa:4544"/>
<dbReference type="MANE-Select" id="ENST00000257068.3">
    <property type="protein sequence ID" value="ENSP00000257068.2"/>
    <property type="RefSeq nucleotide sequence ID" value="NM_005959.5"/>
    <property type="RefSeq protein sequence ID" value="NP_005950.1"/>
</dbReference>
<dbReference type="UCSC" id="uc001pdk.2">
    <property type="organism name" value="human"/>
</dbReference>
<dbReference type="AGR" id="HGNC:7464"/>
<dbReference type="CTD" id="4544"/>
<dbReference type="DisGeNET" id="4544"/>
<dbReference type="GeneCards" id="MTNR1B"/>
<dbReference type="HGNC" id="HGNC:7464">
    <property type="gene designation" value="MTNR1B"/>
</dbReference>
<dbReference type="HPA" id="ENSG00000134640">
    <property type="expression patterns" value="Tissue enhanced (placenta)"/>
</dbReference>
<dbReference type="MalaCards" id="MTNR1B"/>
<dbReference type="MIM" id="600804">
    <property type="type" value="gene"/>
</dbReference>
<dbReference type="neXtProt" id="NX_P49286"/>
<dbReference type="OpenTargets" id="ENSG00000134640"/>
<dbReference type="PharmGKB" id="PA31268"/>
<dbReference type="VEuPathDB" id="HostDB:ENSG00000134640"/>
<dbReference type="eggNOG" id="KOG3656">
    <property type="taxonomic scope" value="Eukaryota"/>
</dbReference>
<dbReference type="GeneTree" id="ENSGT00940000162341"/>
<dbReference type="HOGENOM" id="CLU_009579_3_3_1"/>
<dbReference type="InParanoid" id="P49286"/>
<dbReference type="OMA" id="YNKVYSW"/>
<dbReference type="OrthoDB" id="10044919at2759"/>
<dbReference type="PAN-GO" id="P49286">
    <property type="GO annotations" value="3 GO annotations based on evolutionary models"/>
</dbReference>
<dbReference type="PhylomeDB" id="P49286"/>
<dbReference type="TreeFam" id="TF331693"/>
<dbReference type="PathwayCommons" id="P49286"/>
<dbReference type="Reactome" id="R-HSA-373076">
    <property type="pathway name" value="Class A/1 (Rhodopsin-like receptors)"/>
</dbReference>
<dbReference type="Reactome" id="R-HSA-418594">
    <property type="pathway name" value="G alpha (i) signalling events"/>
</dbReference>
<dbReference type="SignaLink" id="P49286"/>
<dbReference type="SIGNOR" id="P49286"/>
<dbReference type="BioGRID-ORCS" id="4544">
    <property type="hits" value="7 hits in 1151 CRISPR screens"/>
</dbReference>
<dbReference type="GeneWiki" id="Melatonin_receptor_1B"/>
<dbReference type="GenomeRNAi" id="4544"/>
<dbReference type="Pharos" id="P49286">
    <property type="development level" value="Tclin"/>
</dbReference>
<dbReference type="PRO" id="PR:P49286"/>
<dbReference type="Proteomes" id="UP000005640">
    <property type="component" value="Chromosome 11"/>
</dbReference>
<dbReference type="RNAct" id="P49286">
    <property type="molecule type" value="protein"/>
</dbReference>
<dbReference type="Bgee" id="ENSG00000134640">
    <property type="expression patterns" value="Expressed in primordial germ cell in gonad and 35 other cell types or tissues"/>
</dbReference>
<dbReference type="ExpressionAtlas" id="P49286">
    <property type="expression patterns" value="baseline and differential"/>
</dbReference>
<dbReference type="GO" id="GO:0005886">
    <property type="term" value="C:plasma membrane"/>
    <property type="evidence" value="ECO:0000318"/>
    <property type="project" value="GO_Central"/>
</dbReference>
<dbReference type="GO" id="GO:0045202">
    <property type="term" value="C:synapse"/>
    <property type="evidence" value="ECO:0007669"/>
    <property type="project" value="GOC"/>
</dbReference>
<dbReference type="GO" id="GO:0004930">
    <property type="term" value="F:G protein-coupled receptor activity"/>
    <property type="evidence" value="ECO:0000318"/>
    <property type="project" value="GO_Central"/>
</dbReference>
<dbReference type="GO" id="GO:0008502">
    <property type="term" value="F:melatonin receptor activity"/>
    <property type="evidence" value="ECO:0000304"/>
    <property type="project" value="ProtInc"/>
</dbReference>
<dbReference type="GO" id="GO:0043010">
    <property type="term" value="P:camera-type eye development"/>
    <property type="evidence" value="ECO:0007669"/>
    <property type="project" value="Ensembl"/>
</dbReference>
<dbReference type="GO" id="GO:0007268">
    <property type="term" value="P:chemical synaptic transmission"/>
    <property type="evidence" value="ECO:0000304"/>
    <property type="project" value="ProtInc"/>
</dbReference>
<dbReference type="GO" id="GO:0007186">
    <property type="term" value="P:G protein-coupled receptor signaling pathway"/>
    <property type="evidence" value="ECO:0000318"/>
    <property type="project" value="GO_Central"/>
</dbReference>
<dbReference type="GO" id="GO:0007187">
    <property type="term" value="P:G protein-coupled receptor signaling pathway, coupled to cyclic nucleotide second messenger"/>
    <property type="evidence" value="ECO:0000304"/>
    <property type="project" value="ProtInc"/>
</dbReference>
<dbReference type="GO" id="GO:0042593">
    <property type="term" value="P:glucose homeostasis"/>
    <property type="evidence" value="ECO:0000315"/>
    <property type="project" value="BHF-UCL"/>
</dbReference>
<dbReference type="GO" id="GO:0010754">
    <property type="term" value="P:negative regulation of cGMP-mediated signaling"/>
    <property type="evidence" value="ECO:0007669"/>
    <property type="project" value="Ensembl"/>
</dbReference>
<dbReference type="GO" id="GO:0051481">
    <property type="term" value="P:negative regulation of cytosolic calcium ion concentration"/>
    <property type="evidence" value="ECO:0007669"/>
    <property type="project" value="Ensembl"/>
</dbReference>
<dbReference type="GO" id="GO:0046676">
    <property type="term" value="P:negative regulation of insulin secretion"/>
    <property type="evidence" value="ECO:0007669"/>
    <property type="project" value="Ensembl"/>
</dbReference>
<dbReference type="GO" id="GO:0043524">
    <property type="term" value="P:negative regulation of neuron apoptotic process"/>
    <property type="evidence" value="ECO:0007669"/>
    <property type="project" value="Ensembl"/>
</dbReference>
<dbReference type="GO" id="GO:0051970">
    <property type="term" value="P:negative regulation of transmission of nerve impulse"/>
    <property type="evidence" value="ECO:0007669"/>
    <property type="project" value="Ensembl"/>
</dbReference>
<dbReference type="GO" id="GO:0045906">
    <property type="term" value="P:negative regulation of vasoconstriction"/>
    <property type="evidence" value="ECO:0007669"/>
    <property type="project" value="Ensembl"/>
</dbReference>
<dbReference type="GO" id="GO:0046010">
    <property type="term" value="P:positive regulation of circadian sleep/wake cycle, non-REM sleep"/>
    <property type="evidence" value="ECO:0007669"/>
    <property type="project" value="Ensembl"/>
</dbReference>
<dbReference type="GO" id="GO:0051971">
    <property type="term" value="P:positive regulation of transmission of nerve impulse"/>
    <property type="evidence" value="ECO:0007669"/>
    <property type="project" value="Ensembl"/>
</dbReference>
<dbReference type="GO" id="GO:0050796">
    <property type="term" value="P:regulation of insulin secretion"/>
    <property type="evidence" value="ECO:0000315"/>
    <property type="project" value="BHF-UCL"/>
</dbReference>
<dbReference type="GO" id="GO:0098908">
    <property type="term" value="P:regulation of neuronal action potential"/>
    <property type="evidence" value="ECO:0007669"/>
    <property type="project" value="Ensembl"/>
</dbReference>
<dbReference type="CDD" id="cd15400">
    <property type="entry name" value="7tmA_Mel1B"/>
    <property type="match status" value="1"/>
</dbReference>
<dbReference type="FunFam" id="1.20.1070.10:FF:000056">
    <property type="entry name" value="Melatonin receptor type 1A"/>
    <property type="match status" value="1"/>
</dbReference>
<dbReference type="Gene3D" id="1.20.1070.10">
    <property type="entry name" value="Rhodopsin 7-helix transmembrane proteins"/>
    <property type="match status" value="1"/>
</dbReference>
<dbReference type="InterPro" id="IPR000276">
    <property type="entry name" value="GPCR_Rhodpsn"/>
</dbReference>
<dbReference type="InterPro" id="IPR017452">
    <property type="entry name" value="GPCR_Rhodpsn_7TM"/>
</dbReference>
<dbReference type="InterPro" id="IPR002278">
    <property type="entry name" value="Mel_1A/1B_rcpt"/>
</dbReference>
<dbReference type="InterPro" id="IPR000025">
    <property type="entry name" value="Melatonin_rcpt"/>
</dbReference>
<dbReference type="PANTHER" id="PTHR24228">
    <property type="entry name" value="B2 BRADYKININ RECEPTOR/ANGIOTENSIN II RECEPTOR"/>
    <property type="match status" value="1"/>
</dbReference>
<dbReference type="PANTHER" id="PTHR24228:SF54">
    <property type="entry name" value="MELATONIN RECEPTOR TYPE 1B"/>
    <property type="match status" value="1"/>
</dbReference>
<dbReference type="Pfam" id="PF00001">
    <property type="entry name" value="7tm_1"/>
    <property type="match status" value="1"/>
</dbReference>
<dbReference type="PRINTS" id="PR00237">
    <property type="entry name" value="GPCRRHODOPSN"/>
</dbReference>
<dbReference type="PRINTS" id="PR01149">
    <property type="entry name" value="MELATONIN1AR"/>
</dbReference>
<dbReference type="PRINTS" id="PR00857">
    <property type="entry name" value="MELATONINR"/>
</dbReference>
<dbReference type="SMART" id="SM01381">
    <property type="entry name" value="7TM_GPCR_Srsx"/>
    <property type="match status" value="1"/>
</dbReference>
<dbReference type="SUPFAM" id="SSF81321">
    <property type="entry name" value="Family A G protein-coupled receptor-like"/>
    <property type="match status" value="1"/>
</dbReference>
<dbReference type="PROSITE" id="PS00237">
    <property type="entry name" value="G_PROTEIN_RECEP_F1_1"/>
    <property type="match status" value="1"/>
</dbReference>
<dbReference type="PROSITE" id="PS50262">
    <property type="entry name" value="G_PROTEIN_RECEP_F1_2"/>
    <property type="match status" value="1"/>
</dbReference>
<protein>
    <recommendedName>
        <fullName>Melatonin receptor type 1B</fullName>
        <shortName>Mel-1B-R</shortName>
        <shortName>Mel1b receptor</shortName>
    </recommendedName>
</protein>